<gene>
    <name type="primary">SLC7A5P1</name>
    <name type="synonym">MLAS</name>
</gene>
<organism>
    <name type="scientific">Homo sapiens</name>
    <name type="common">Human</name>
    <dbReference type="NCBI Taxonomy" id="9606"/>
    <lineage>
        <taxon>Eukaryota</taxon>
        <taxon>Metazoa</taxon>
        <taxon>Chordata</taxon>
        <taxon>Craniata</taxon>
        <taxon>Vertebrata</taxon>
        <taxon>Euteleostomi</taxon>
        <taxon>Mammalia</taxon>
        <taxon>Eutheria</taxon>
        <taxon>Euarchontoglires</taxon>
        <taxon>Primates</taxon>
        <taxon>Haplorrhini</taxon>
        <taxon>Catarrhini</taxon>
        <taxon>Hominidae</taxon>
        <taxon>Homo</taxon>
    </lineage>
</organism>
<comment type="subcellular location">
    <subcellularLocation>
        <location evidence="4">Membrane</location>
        <topology evidence="4">Multi-pass membrane protein</topology>
    </subcellularLocation>
</comment>
<comment type="tissue specificity">
    <text evidence="3">Expressed in peripheral blood mononuclear cells and lymphoid and myeloid cell lines.</text>
</comment>
<comment type="similarity">
    <text evidence="4">Belongs to the amino acid-polyamine-organocation (APC) superfamily. L-type amino acid transporter (LAT) (TC 2.A.3.8) family.</text>
</comment>
<comment type="caution">
    <text evidence="4">Could be the product of a pseudogene.</text>
</comment>
<evidence type="ECO:0000255" key="1"/>
<evidence type="ECO:0000256" key="2">
    <source>
        <dbReference type="SAM" id="MobiDB-lite"/>
    </source>
</evidence>
<evidence type="ECO:0000269" key="3">
    <source>
    </source>
</evidence>
<evidence type="ECO:0000305" key="4"/>
<name>LAT1N_HUMAN</name>
<proteinExistence type="uncertain"/>
<feature type="chain" id="PRO_0000348251" description="Putative L-type amino acid transporter 1-like protein MLAS">
    <location>
        <begin position="1"/>
        <end position="180"/>
    </location>
</feature>
<feature type="transmembrane region" description="Helical" evidence="1">
    <location>
        <begin position="56"/>
        <end position="76"/>
    </location>
</feature>
<feature type="transmembrane region" description="Helical" evidence="1">
    <location>
        <begin position="84"/>
        <end position="104"/>
    </location>
</feature>
<feature type="transmembrane region" description="Helical" evidence="1">
    <location>
        <begin position="133"/>
        <end position="157"/>
    </location>
</feature>
<feature type="region of interest" description="Disordered" evidence="2">
    <location>
        <begin position="1"/>
        <end position="40"/>
    </location>
</feature>
<feature type="compositionally biased region" description="Basic residues" evidence="2">
    <location>
        <begin position="1"/>
        <end position="10"/>
    </location>
</feature>
<feature type="compositionally biased region" description="Basic and acidic residues" evidence="2">
    <location>
        <begin position="16"/>
        <end position="33"/>
    </location>
</feature>
<protein>
    <recommendedName>
        <fullName>Putative L-type amino acid transporter 1-like protein MLAS</fullName>
    </recommendedName>
    <alternativeName>
        <fullName>hLAT1 3-transmembrane protein MLAS</fullName>
        <shortName>hLAT1 3TM MLAS</shortName>
    </alternativeName>
</protein>
<sequence length="180" mass="18779">MAGAGPKRRALAAPVAEEKEEAREKMLASKRADGAAPAGEGEGVTLQRNITLLNGVAIIVGAIIGSGIFVTPTGVLKEAGSPGLALVMWAACGVFSIVGALCYAELGTTISKSGGDYAYMLDVYGSLPAFLKLWIELLVIRPSSQYIVALVFATYLLKPLFPSCPVPEEAAKLMACHCVH</sequence>
<keyword id="KW-0472">Membrane</keyword>
<keyword id="KW-1185">Reference proteome</keyword>
<keyword id="KW-0812">Transmembrane</keyword>
<keyword id="KW-1133">Transmembrane helix</keyword>
<accession>Q8MH63</accession>
<reference key="1">
    <citation type="journal article" date="2002" name="Int. J. Biochem. Cell Biol.">
        <title>Up-regulated expression of a novel gene in activated human peripheral blood mononuclear cells that is a truncated paralog of the human system L-amino acid transporter 1.</title>
        <authorList>
            <person name="Ito M."/>
            <person name="Takebayashi S."/>
            <person name="Okumura K."/>
            <person name="Ohkubo T."/>
            <person name="Nishio M."/>
            <person name="Kawano M."/>
            <person name="Komada H."/>
            <person name="Ito Y."/>
            <person name="Tsurudome M."/>
        </authorList>
    </citation>
    <scope>NUCLEOTIDE SEQUENCE [MRNA]</scope>
    <scope>TISSUE SPECIFICITY</scope>
</reference>
<dbReference type="EMBL" id="AB055226">
    <property type="protein sequence ID" value="BAB97212.1"/>
    <property type="molecule type" value="mRNA"/>
</dbReference>
<dbReference type="SMR" id="Q8MH63"/>
<dbReference type="GlyGen" id="Q8MH63">
    <property type="glycosylation" value="1 site"/>
</dbReference>
<dbReference type="iPTMnet" id="Q8MH63"/>
<dbReference type="PhosphoSitePlus" id="Q8MH63"/>
<dbReference type="BioMuta" id="HGNC:29458"/>
<dbReference type="DMDM" id="74750867"/>
<dbReference type="jPOST" id="Q8MH63"/>
<dbReference type="MassIVE" id="Q8MH63"/>
<dbReference type="PeptideAtlas" id="Q8MH63"/>
<dbReference type="AGR" id="HGNC:29458"/>
<dbReference type="GeneCards" id="SLC7A5P1"/>
<dbReference type="HGNC" id="HGNC:29458">
    <property type="gene designation" value="SLC7A5P1"/>
</dbReference>
<dbReference type="neXtProt" id="NX_Q8MH63"/>
<dbReference type="InParanoid" id="Q8MH63"/>
<dbReference type="PAN-GO" id="Q8MH63">
    <property type="GO annotations" value="2 GO annotations based on evolutionary models"/>
</dbReference>
<dbReference type="PathwayCommons" id="Q8MH63"/>
<dbReference type="SignaLink" id="Q8MH63"/>
<dbReference type="Pharos" id="Q8MH63">
    <property type="development level" value="Tdark"/>
</dbReference>
<dbReference type="Proteomes" id="UP000005640">
    <property type="component" value="Unplaced"/>
</dbReference>
<dbReference type="RNAct" id="Q8MH63">
    <property type="molecule type" value="protein"/>
</dbReference>
<dbReference type="GO" id="GO:0016020">
    <property type="term" value="C:membrane"/>
    <property type="evidence" value="ECO:0007669"/>
    <property type="project" value="UniProtKB-SubCell"/>
</dbReference>
<dbReference type="GO" id="GO:0022857">
    <property type="term" value="F:transmembrane transporter activity"/>
    <property type="evidence" value="ECO:0007669"/>
    <property type="project" value="InterPro"/>
</dbReference>
<dbReference type="GO" id="GO:1902475">
    <property type="term" value="P:L-alpha-amino acid transmembrane transport"/>
    <property type="evidence" value="ECO:0007669"/>
    <property type="project" value="UniProtKB-ARBA"/>
</dbReference>
<dbReference type="FunFam" id="1.20.1740.10:FF:000092">
    <property type="entry name" value="Putative L-type amino acid transporter 1-like protein MLAS"/>
    <property type="match status" value="1"/>
</dbReference>
<dbReference type="Gene3D" id="1.20.1740.10">
    <property type="entry name" value="Amino acid/polyamine transporter I"/>
    <property type="match status" value="1"/>
</dbReference>
<dbReference type="InterPro" id="IPR002293">
    <property type="entry name" value="AA/rel_permease1"/>
</dbReference>
<dbReference type="InterPro" id="IPR050598">
    <property type="entry name" value="AminoAcid_Transporter"/>
</dbReference>
<dbReference type="PANTHER" id="PTHR11785">
    <property type="entry name" value="AMINO ACID TRANSPORTER"/>
    <property type="match status" value="1"/>
</dbReference>
<dbReference type="PANTHER" id="PTHR11785:SF315">
    <property type="entry name" value="LARGE NEUTRAL AMINO ACIDS TRANSPORTER SMALL SUBUNIT 1"/>
    <property type="match status" value="1"/>
</dbReference>
<dbReference type="Pfam" id="PF13520">
    <property type="entry name" value="AA_permease_2"/>
    <property type="match status" value="1"/>
</dbReference>